<reference key="1">
    <citation type="journal article" date="1999" name="Mol. Endocrinol.">
        <title>Differential activation of pituitary hormone genes by human Lhx3 isoforms with distinct DNA binding properties.</title>
        <authorList>
            <person name="Sloop K.W."/>
            <person name="Meier B.C."/>
            <person name="Bridwell J.L."/>
            <person name="Parker G.E."/>
            <person name="Schiller A.M."/>
            <person name="Rhodes S.J."/>
        </authorList>
    </citation>
    <scope>NUCLEOTIDE SEQUENCE [MRNA]</scope>
    <scope>ALTERNATIVE SPLICING</scope>
</reference>
<reference key="2">
    <citation type="submission" date="1998-10" db="EMBL/GenBank/DDBJ databases">
        <title>Human LHX3: cloning, mapping, genomic structure.</title>
        <authorList>
            <person name="Sobrier M.-L."/>
        </authorList>
    </citation>
    <scope>NUCLEOTIDE SEQUENCE [GENOMIC DNA]</scope>
    <scope>ALTERNATIVE SPLICING</scope>
</reference>
<reference key="3">
    <citation type="submission" date="2001-04" db="EMBL/GenBank/DDBJ databases">
        <title>Molecular cloning and expression pattern of human Lhx3 gene.</title>
        <authorList>
            <person name="You X."/>
            <person name="Imperato-McGinley J."/>
            <person name="Zhu Y.-S."/>
        </authorList>
    </citation>
    <scope>NUCLEOTIDE SEQUENCE [GENOMIC DNA]</scope>
</reference>
<reference key="4">
    <citation type="journal article" date="2004" name="Nature">
        <title>DNA sequence and analysis of human chromosome 9.</title>
        <authorList>
            <person name="Humphray S.J."/>
            <person name="Oliver K."/>
            <person name="Hunt A.R."/>
            <person name="Plumb R.W."/>
            <person name="Loveland J.E."/>
            <person name="Howe K.L."/>
            <person name="Andrews T.D."/>
            <person name="Searle S."/>
            <person name="Hunt S.E."/>
            <person name="Scott C.E."/>
            <person name="Jones M.C."/>
            <person name="Ainscough R."/>
            <person name="Almeida J.P."/>
            <person name="Ambrose K.D."/>
            <person name="Ashwell R.I.S."/>
            <person name="Babbage A.K."/>
            <person name="Babbage S."/>
            <person name="Bagguley C.L."/>
            <person name="Bailey J."/>
            <person name="Banerjee R."/>
            <person name="Barker D.J."/>
            <person name="Barlow K.F."/>
            <person name="Bates K."/>
            <person name="Beasley H."/>
            <person name="Beasley O."/>
            <person name="Bird C.P."/>
            <person name="Bray-Allen S."/>
            <person name="Brown A.J."/>
            <person name="Brown J.Y."/>
            <person name="Burford D."/>
            <person name="Burrill W."/>
            <person name="Burton J."/>
            <person name="Carder C."/>
            <person name="Carter N.P."/>
            <person name="Chapman J.C."/>
            <person name="Chen Y."/>
            <person name="Clarke G."/>
            <person name="Clark S.Y."/>
            <person name="Clee C.M."/>
            <person name="Clegg S."/>
            <person name="Collier R.E."/>
            <person name="Corby N."/>
            <person name="Crosier M."/>
            <person name="Cummings A.T."/>
            <person name="Davies J."/>
            <person name="Dhami P."/>
            <person name="Dunn M."/>
            <person name="Dutta I."/>
            <person name="Dyer L.W."/>
            <person name="Earthrowl M.E."/>
            <person name="Faulkner L."/>
            <person name="Fleming C.J."/>
            <person name="Frankish A."/>
            <person name="Frankland J.A."/>
            <person name="French L."/>
            <person name="Fricker D.G."/>
            <person name="Garner P."/>
            <person name="Garnett J."/>
            <person name="Ghori J."/>
            <person name="Gilbert J.G.R."/>
            <person name="Glison C."/>
            <person name="Grafham D.V."/>
            <person name="Gribble S."/>
            <person name="Griffiths C."/>
            <person name="Griffiths-Jones S."/>
            <person name="Grocock R."/>
            <person name="Guy J."/>
            <person name="Hall R.E."/>
            <person name="Hammond S."/>
            <person name="Harley J.L."/>
            <person name="Harrison E.S.I."/>
            <person name="Hart E.A."/>
            <person name="Heath P.D."/>
            <person name="Henderson C.D."/>
            <person name="Hopkins B.L."/>
            <person name="Howard P.J."/>
            <person name="Howden P.J."/>
            <person name="Huckle E."/>
            <person name="Johnson C."/>
            <person name="Johnson D."/>
            <person name="Joy A.A."/>
            <person name="Kay M."/>
            <person name="Keenan S."/>
            <person name="Kershaw J.K."/>
            <person name="Kimberley A.M."/>
            <person name="King A."/>
            <person name="Knights A."/>
            <person name="Laird G.K."/>
            <person name="Langford C."/>
            <person name="Lawlor S."/>
            <person name="Leongamornlert D.A."/>
            <person name="Leversha M."/>
            <person name="Lloyd C."/>
            <person name="Lloyd D.M."/>
            <person name="Lovell J."/>
            <person name="Martin S."/>
            <person name="Mashreghi-Mohammadi M."/>
            <person name="Matthews L."/>
            <person name="McLaren S."/>
            <person name="McLay K.E."/>
            <person name="McMurray A."/>
            <person name="Milne S."/>
            <person name="Nickerson T."/>
            <person name="Nisbett J."/>
            <person name="Nordsiek G."/>
            <person name="Pearce A.V."/>
            <person name="Peck A.I."/>
            <person name="Porter K.M."/>
            <person name="Pandian R."/>
            <person name="Pelan S."/>
            <person name="Phillimore B."/>
            <person name="Povey S."/>
            <person name="Ramsey Y."/>
            <person name="Rand V."/>
            <person name="Scharfe M."/>
            <person name="Sehra H.K."/>
            <person name="Shownkeen R."/>
            <person name="Sims S.K."/>
            <person name="Skuce C.D."/>
            <person name="Smith M."/>
            <person name="Steward C.A."/>
            <person name="Swarbreck D."/>
            <person name="Sycamore N."/>
            <person name="Tester J."/>
            <person name="Thorpe A."/>
            <person name="Tracey A."/>
            <person name="Tromans A."/>
            <person name="Thomas D.W."/>
            <person name="Wall M."/>
            <person name="Wallis J.M."/>
            <person name="West A.P."/>
            <person name="Whitehead S.L."/>
            <person name="Willey D.L."/>
            <person name="Williams S.A."/>
            <person name="Wilming L."/>
            <person name="Wray P.W."/>
            <person name="Young L."/>
            <person name="Ashurst J.L."/>
            <person name="Coulson A."/>
            <person name="Blocker H."/>
            <person name="Durbin R.M."/>
            <person name="Sulston J.E."/>
            <person name="Hubbard T."/>
            <person name="Jackson M.J."/>
            <person name="Bentley D.R."/>
            <person name="Beck S."/>
            <person name="Rogers J."/>
            <person name="Dunham I."/>
        </authorList>
    </citation>
    <scope>NUCLEOTIDE SEQUENCE [LARGE SCALE GENOMIC DNA]</scope>
</reference>
<reference key="5">
    <citation type="submission" date="2005-07" db="EMBL/GenBank/DDBJ databases">
        <authorList>
            <person name="Mural R.J."/>
            <person name="Istrail S."/>
            <person name="Sutton G.G."/>
            <person name="Florea L."/>
            <person name="Halpern A.L."/>
            <person name="Mobarry C.M."/>
            <person name="Lippert R."/>
            <person name="Walenz B."/>
            <person name="Shatkay H."/>
            <person name="Dew I."/>
            <person name="Miller J.R."/>
            <person name="Flanigan M.J."/>
            <person name="Edwards N.J."/>
            <person name="Bolanos R."/>
            <person name="Fasulo D."/>
            <person name="Halldorsson B.V."/>
            <person name="Hannenhalli S."/>
            <person name="Turner R."/>
            <person name="Yooseph S."/>
            <person name="Lu F."/>
            <person name="Nusskern D.R."/>
            <person name="Shue B.C."/>
            <person name="Zheng X.H."/>
            <person name="Zhong F."/>
            <person name="Delcher A.L."/>
            <person name="Huson D.H."/>
            <person name="Kravitz S.A."/>
            <person name="Mouchard L."/>
            <person name="Reinert K."/>
            <person name="Remington K.A."/>
            <person name="Clark A.G."/>
            <person name="Waterman M.S."/>
            <person name="Eichler E.E."/>
            <person name="Adams M.D."/>
            <person name="Hunkapiller M.W."/>
            <person name="Myers E.W."/>
            <person name="Venter J.C."/>
        </authorList>
    </citation>
    <scope>NUCLEOTIDE SEQUENCE [LARGE SCALE GENOMIC DNA]</scope>
</reference>
<reference key="6">
    <citation type="journal article" date="2005" name="J. Cell. Biochem.">
        <title>Serine/threonine/tyrosine phosphorylation of the LHX3 LIM-homeodomain transcription factor.</title>
        <authorList>
            <person name="Parker G.E."/>
            <person name="West B.E."/>
            <person name="Witzmann F.A."/>
            <person name="Rhodes S.J."/>
        </authorList>
    </citation>
    <scope>PHOSPHORYLATION AT THR-63; SER-71; TYR-227; SER-234 AND SER-238</scope>
</reference>
<reference key="7">
    <citation type="journal article" date="2011" name="Proc. Natl. Acad. Sci. U.S.A.">
        <title>Model of pediatric pituitary hormone deficiency separates the endocrine and neural functions of the LHX3 transcription factor in vivo.</title>
        <authorList>
            <person name="Colvin S.C."/>
            <person name="Malik R.E."/>
            <person name="Showalter A.D."/>
            <person name="Sloop K.W."/>
            <person name="Rhodes S.J."/>
        </authorList>
    </citation>
    <scope>FUNCTION</scope>
</reference>
<reference key="8">
    <citation type="journal article" date="2016" name="Hum. Mol. Genet.">
        <title>Functional characterization of a human POU1F1 mutation associated with isolated growth hormone deficiency: a novel etiology for IGHD.</title>
        <authorList>
            <person name="Sobrier M.L."/>
            <person name="Tsai Y.C."/>
            <person name="Perez C."/>
            <person name="Leheup B."/>
            <person name="Bouceba T."/>
            <person name="Duquesnoy P."/>
            <person name="Copin B."/>
            <person name="Sizova D."/>
            <person name="Penzo A."/>
            <person name="Stanger B.Z."/>
            <person name="Cooke N.E."/>
            <person name="Liebhaber S.A."/>
            <person name="Amselem S."/>
        </authorList>
    </citation>
    <scope>INTERACTION WITH POU1F1</scope>
</reference>
<reference key="9">
    <citation type="journal article" date="2000" name="Nat. Genet.">
        <title>Mutations in LHX3 result in a new syndrome revealed by combined pituitary hormone deficiency.</title>
        <authorList>
            <person name="Netchine I."/>
            <person name="Sobrier M.-L."/>
            <person name="Krude H."/>
            <person name="Schnabel D."/>
            <person name="Maghnie M."/>
            <person name="Marcos E."/>
            <person name="Duriez B."/>
            <person name="Cacheux V."/>
            <person name="Moers A.V."/>
            <person name="Goossens M."/>
            <person name="Gruters A."/>
            <person name="Amselem S."/>
        </authorList>
    </citation>
    <scope>VARIANT CPHD3 CYS-111</scope>
</reference>
<reference key="10">
    <citation type="journal article" date="2007" name="J. Clin. Endocrinol. Metab.">
        <title>Four novel mutations of the LHX3 gene cause combined pituitary hormone deficiencies with or without limited neck rotation.</title>
        <authorList>
            <person name="Pfaeffle R.W."/>
            <person name="Savage J.J."/>
            <person name="Hunter C.S."/>
            <person name="Palme C."/>
            <person name="Ahlmann M."/>
            <person name="Kumar P."/>
            <person name="Bellone J."/>
            <person name="Schoenau E."/>
            <person name="Korsch E."/>
            <person name="Braemswig J.H."/>
            <person name="Stobbe H.M."/>
            <person name="Blum W.F."/>
            <person name="Rhodes S.J."/>
        </authorList>
    </citation>
    <scope>VARIANT CPHD3 VAL-210</scope>
    <scope>CHARACTERIZATION OF VARIANT CPHD3 VAL-210</scope>
</reference>
<reference key="11">
    <citation type="journal article" date="2017" name="BMC Endocr. Disord.">
        <title>Two novel LHX3 mutations in patients with combined pituitary hormone deficiency including cervical rigidity and sensorineural hearing loss.</title>
        <authorList>
            <person name="Ramzan K."/>
            <person name="Bin-Abbas B."/>
            <person name="Al-Jomaa L."/>
            <person name="Allam R."/>
            <person name="Al-Owain M."/>
            <person name="Imtiaz F."/>
        </authorList>
    </citation>
    <scope>VARIANTS CPHD3 PHE-141 AND 151-ARG--PHE-397 DEL</scope>
</reference>
<comment type="function">
    <text evidence="2 9">Transcription factor. Recognizes and binds to the consensus sequence motif 5'-AATTAATTA-3' in the regulatory elements of target genes, such as glycoprotein hormones alpha chain CGA and visual system homeobox CHX10, positively modulating transcription; transcription can be co-activated by LDB2. Synergistically enhances transcription from the prolactin promoter in cooperation with POU1F1/Pit-1 (By similarity). Required for the establishment of the specialized cells of the pituitary gland and the nervous system (PubMed:21149718). Involved in the development of interneurons and motor neurons in cooperation with LDB1 and ISL1 (By similarity).</text>
</comment>
<comment type="subunit">
    <text evidence="2 10">Interacts with POU1F1 (PubMed:26612202). At neuronal promoters, interacts with LDB1, in motor neurons LDB1 is displaced by ISL1 and a ternary complex is formed in which ISL1 contacts both LHX3 and LDB1; allosteric structural changes in the DNA binding domain of LHX3, induced by the ISL1-LHX3 interaction, may explain differences in sequence specificity of the different complexes. Interacts with LDB2. May interact with CITED2/MRG1 (By similarity).</text>
</comment>
<comment type="interaction">
    <interactant intactId="EBI-12039345">
        <id>Q9UBR4-2</id>
    </interactant>
    <interactant intactId="EBI-11096309">
        <id>Q9NYB9-2</id>
        <label>ABI2</label>
    </interactant>
    <organismsDiffer>false</organismsDiffer>
    <experiments>3</experiments>
</comment>
<comment type="interaction">
    <interactant intactId="EBI-12039345">
        <id>Q9UBR4-2</id>
    </interactant>
    <interactant intactId="EBI-2880652">
        <id>Q08043</id>
        <label>ACTN3</label>
    </interactant>
    <organismsDiffer>false</organismsDiffer>
    <experiments>5</experiments>
</comment>
<comment type="interaction">
    <interactant intactId="EBI-12039345">
        <id>Q9UBR4-2</id>
    </interactant>
    <interactant intactId="EBI-12351549">
        <id>Q9BQI0-4</id>
        <label>AIF1L</label>
    </interactant>
    <organismsDiffer>false</organismsDiffer>
    <experiments>3</experiments>
</comment>
<comment type="interaction">
    <interactant intactId="EBI-12039345">
        <id>Q9UBR4-2</id>
    </interactant>
    <interactant intactId="EBI-22011535">
        <id>Q5TZF3-1</id>
        <label>ANKRD45</label>
    </interactant>
    <organismsDiffer>false</organismsDiffer>
    <experiments>3</experiments>
</comment>
<comment type="interaction">
    <interactant intactId="EBI-12039345">
        <id>Q9UBR4-2</id>
    </interactant>
    <interactant intactId="EBI-711802">
        <id>O75348</id>
        <label>ATP6V1G1</label>
    </interactant>
    <organismsDiffer>false</organismsDiffer>
    <experiments>3</experiments>
</comment>
<comment type="interaction">
    <interactant intactId="EBI-12039345">
        <id>Q9UBR4-2</id>
    </interactant>
    <interactant intactId="EBI-358049">
        <id>Q13895</id>
        <label>BYSL</label>
    </interactant>
    <organismsDiffer>false</organismsDiffer>
    <experiments>3</experiments>
</comment>
<comment type="interaction">
    <interactant intactId="EBI-12039345">
        <id>Q9UBR4-2</id>
    </interactant>
    <interactant intactId="EBI-739879">
        <id>Q53TS8</id>
        <label>C2CD6</label>
    </interactant>
    <organismsDiffer>false</organismsDiffer>
    <experiments>3</experiments>
</comment>
<comment type="interaction">
    <interactant intactId="EBI-12039345">
        <id>Q9UBR4-2</id>
    </interactant>
    <interactant intactId="EBI-10749669">
        <id>Q8IYE0</id>
        <label>CCDC146</label>
    </interactant>
    <organismsDiffer>false</organismsDiffer>
    <experiments>3</experiments>
</comment>
<comment type="interaction">
    <interactant intactId="EBI-12039345">
        <id>Q9UBR4-2</id>
    </interactant>
    <interactant intactId="EBI-1045350">
        <id>Q16204</id>
        <label>CCDC6</label>
    </interactant>
    <organismsDiffer>false</organismsDiffer>
    <experiments>3</experiments>
</comment>
<comment type="interaction">
    <interactant intactId="EBI-12039345">
        <id>Q9UBR4-2</id>
    </interactant>
    <interactant intactId="EBI-396137">
        <id>Q9UJX2</id>
        <label>CDC23</label>
    </interactant>
    <organismsDiffer>false</organismsDiffer>
    <experiments>3</experiments>
</comment>
<comment type="interaction">
    <interactant intactId="EBI-12039345">
        <id>Q9UBR4-2</id>
    </interactant>
    <interactant intactId="EBI-1245761">
        <id>Q00526</id>
        <label>CDK3</label>
    </interactant>
    <organismsDiffer>false</organismsDiffer>
    <experiments>3</experiments>
</comment>
<comment type="interaction">
    <interactant intactId="EBI-12039345">
        <id>Q9UBR4-2</id>
    </interactant>
    <interactant intactId="EBI-456371">
        <id>P61024</id>
        <label>CKS1B</label>
    </interactant>
    <organismsDiffer>false</organismsDiffer>
    <experiments>3</experiments>
</comment>
<comment type="interaction">
    <interactant intactId="EBI-12039345">
        <id>Q9UBR4-2</id>
    </interactant>
    <interactant intactId="EBI-11980535">
        <id>P51800-3</id>
        <label>CLCNKA</label>
    </interactant>
    <organismsDiffer>false</organismsDiffer>
    <experiments>3</experiments>
</comment>
<comment type="interaction">
    <interactant intactId="EBI-12039345">
        <id>Q9UBR4-2</id>
    </interactant>
    <interactant intactId="EBI-12012272">
        <id>Q9UBL6-2</id>
        <label>CPNE7</label>
    </interactant>
    <organismsDiffer>false</organismsDiffer>
    <experiments>3</experiments>
</comment>
<comment type="interaction">
    <interactant intactId="EBI-12039345">
        <id>Q9UBR4-2</id>
    </interactant>
    <interactant intactId="EBI-347804">
        <id>P68400</id>
        <label>CSNK2A1</label>
    </interactant>
    <organismsDiffer>false</organismsDiffer>
    <experiments>3</experiments>
</comment>
<comment type="interaction">
    <interactant intactId="EBI-12039345">
        <id>Q9UBR4-2</id>
    </interactant>
    <interactant intactId="EBI-5453285">
        <id>Q2TBE0</id>
        <label>CWF19L2</label>
    </interactant>
    <organismsDiffer>false</organismsDiffer>
    <experiments>3</experiments>
</comment>
<comment type="interaction">
    <interactant intactId="EBI-12039345">
        <id>Q9UBR4-2</id>
    </interactant>
    <interactant intactId="EBI-744099">
        <id>Q9H0I2</id>
        <label>ENKD1</label>
    </interactant>
    <organismsDiffer>false</organismsDiffer>
    <experiments>3</experiments>
</comment>
<comment type="interaction">
    <interactant intactId="EBI-12039345">
        <id>Q9UBR4-2</id>
    </interactant>
    <interactant intactId="EBI-12039347">
        <id>Q9NVQ4-2</id>
        <label>FAIM</label>
    </interactant>
    <organismsDiffer>false</organismsDiffer>
    <experiments>3</experiments>
</comment>
<comment type="interaction">
    <interactant intactId="EBI-12039345">
        <id>Q9UBR4-2</id>
    </interactant>
    <interactant intactId="EBI-11986315">
        <id>Q9H5Z6-2</id>
        <label>FAM124B</label>
    </interactant>
    <organismsDiffer>false</organismsDiffer>
    <experiments>3</experiments>
</comment>
<comment type="interaction">
    <interactant intactId="EBI-12039345">
        <id>Q9UBR4-2</id>
    </interactant>
    <interactant intactId="EBI-11960181">
        <id>A4D161</id>
        <label>FAM221A</label>
    </interactant>
    <organismsDiffer>false</organismsDiffer>
    <experiments>3</experiments>
</comment>
<comment type="interaction">
    <interactant intactId="EBI-12039345">
        <id>Q9UBR4-2</id>
    </interactant>
    <interactant intactId="EBI-11976617">
        <id>Q6QHK4</id>
        <label>FIGLA</label>
    </interactant>
    <organismsDiffer>false</organismsDiffer>
    <experiments>5</experiments>
</comment>
<comment type="interaction">
    <interactant intactId="EBI-12039345">
        <id>Q9UBR4-2</id>
    </interactant>
    <interactant intactId="EBI-7960826">
        <id>Q8NHY3</id>
        <label>GAS2L2</label>
    </interactant>
    <organismsDiffer>false</organismsDiffer>
    <experiments>5</experiments>
</comment>
<comment type="interaction">
    <interactant intactId="EBI-12039345">
        <id>Q9UBR4-2</id>
    </interactant>
    <interactant intactId="EBI-1052570">
        <id>O95995</id>
        <label>GAS8</label>
    </interactant>
    <organismsDiffer>false</organismsDiffer>
    <experiments>3</experiments>
</comment>
<comment type="interaction">
    <interactant intactId="EBI-12039345">
        <id>Q9UBR4-2</id>
    </interactant>
    <interactant intactId="EBI-10188645">
        <id>O75603</id>
        <label>GCM2</label>
    </interactant>
    <organismsDiffer>false</organismsDiffer>
    <experiments>3</experiments>
</comment>
<comment type="interaction">
    <interactant intactId="EBI-12039345">
        <id>Q9UBR4-2</id>
    </interactant>
    <interactant intactId="EBI-11978177">
        <id>Q96NT3-2</id>
        <label>GUCD1</label>
    </interactant>
    <organismsDiffer>false</organismsDiffer>
    <experiments>3</experiments>
</comment>
<comment type="interaction">
    <interactant intactId="EBI-12039345">
        <id>Q9UBR4-2</id>
    </interactant>
    <interactant intactId="EBI-11955357">
        <id>Q00444</id>
        <label>HOXC5</label>
    </interactant>
    <organismsDiffer>false</organismsDiffer>
    <experiments>3</experiments>
</comment>
<comment type="interaction">
    <interactant intactId="EBI-12039345">
        <id>Q9UBR4-2</id>
    </interactant>
    <interactant intactId="EBI-1752118">
        <id>P31273</id>
        <label>HOXC8</label>
    </interactant>
    <organismsDiffer>false</organismsDiffer>
    <experiments>3</experiments>
</comment>
<comment type="interaction">
    <interactant intactId="EBI-12039345">
        <id>Q9UBR4-2</id>
    </interactant>
    <interactant intactId="EBI-6509505">
        <id>Q0VD86</id>
        <label>INCA1</label>
    </interactant>
    <organismsDiffer>false</organismsDiffer>
    <experiments>5</experiments>
</comment>
<comment type="interaction">
    <interactant intactId="EBI-12039345">
        <id>Q9UBR4-2</id>
    </interactant>
    <interactant intactId="EBI-12081118">
        <id>Q1MX18</id>
        <label>INSC</label>
    </interactant>
    <organismsDiffer>false</organismsDiffer>
    <experiments>3</experiments>
</comment>
<comment type="interaction">
    <interactant intactId="EBI-12039345">
        <id>Q9UBR4-2</id>
    </interactant>
    <interactant intactId="EBI-12240836">
        <id>Q96HW7-3</id>
        <label>INTS4</label>
    </interactant>
    <organismsDiffer>false</organismsDiffer>
    <experiments>3</experiments>
</comment>
<comment type="interaction">
    <interactant intactId="EBI-12039345">
        <id>Q9UBR4-2</id>
    </interactant>
    <interactant intactId="EBI-10220600">
        <id>Q8NA54</id>
        <label>IQUB</label>
    </interactant>
    <organismsDiffer>false</organismsDiffer>
    <experiments>3</experiments>
</comment>
<comment type="interaction">
    <interactant intactId="EBI-12039345">
        <id>Q9UBR4-2</id>
    </interactant>
    <interactant intactId="EBI-2556193">
        <id>Q63ZY3</id>
        <label>KANK2</label>
    </interactant>
    <organismsDiffer>false</organismsDiffer>
    <experiments>3</experiments>
</comment>
<comment type="interaction">
    <interactant intactId="EBI-12039345">
        <id>Q9UBR4-2</id>
    </interactant>
    <interactant intactId="EBI-6426443">
        <id>Q2WGJ6</id>
        <label>KLHL38</label>
    </interactant>
    <organismsDiffer>false</organismsDiffer>
    <experiments>3</experiments>
</comment>
<comment type="interaction">
    <interactant intactId="EBI-12039345">
        <id>Q9UBR4-2</id>
    </interactant>
    <interactant intactId="EBI-2430095">
        <id>P12035</id>
        <label>KRT3</label>
    </interactant>
    <organismsDiffer>false</organismsDiffer>
    <experiments>3</experiments>
</comment>
<comment type="interaction">
    <interactant intactId="EBI-12039345">
        <id>Q9UBR4-2</id>
    </interactant>
    <interactant intactId="EBI-11979761">
        <id>Q86U70-2</id>
        <label>LDB1</label>
    </interactant>
    <organismsDiffer>false</organismsDiffer>
    <experiments>5</experiments>
</comment>
<comment type="interaction">
    <interactant intactId="EBI-12039345">
        <id>Q9UBR4-2</id>
    </interactant>
    <interactant intactId="EBI-713568">
        <id>P45984</id>
        <label>MAPK9</label>
    </interactant>
    <organismsDiffer>false</organismsDiffer>
    <experiments>3</experiments>
</comment>
<comment type="interaction">
    <interactant intactId="EBI-12039345">
        <id>Q9UBR4-2</id>
    </interactant>
    <interactant intactId="EBI-10271199">
        <id>Q8NI38</id>
        <label>NFKBID</label>
    </interactant>
    <organismsDiffer>false</organismsDiffer>
    <experiments>3</experiments>
</comment>
<comment type="interaction">
    <interactant intactId="EBI-12039345">
        <id>Q9UBR4-2</id>
    </interactant>
    <interactant intactId="EBI-1042642">
        <id>Q9H7Z3</id>
        <label>NRDE2</label>
    </interactant>
    <organismsDiffer>false</organismsDiffer>
    <experiments>3</experiments>
</comment>
<comment type="interaction">
    <interactant intactId="EBI-12039345">
        <id>Q9UBR4-2</id>
    </interactant>
    <interactant intactId="EBI-11742836">
        <id>Q16656-4</id>
        <label>NRF1</label>
    </interactant>
    <organismsDiffer>false</organismsDiffer>
    <experiments>3</experiments>
</comment>
<comment type="interaction">
    <interactant intactId="EBI-12039345">
        <id>Q9UBR4-2</id>
    </interactant>
    <interactant intactId="EBI-10297093">
        <id>Q9BRQ3</id>
        <label>NUDT22</label>
    </interactant>
    <organismsDiffer>false</organismsDiffer>
    <experiments>3</experiments>
</comment>
<comment type="interaction">
    <interactant intactId="EBI-12039345">
        <id>Q9UBR4-2</id>
    </interactant>
    <interactant intactId="EBI-11749425">
        <id>Q01968-2</id>
        <label>OCRL</label>
    </interactant>
    <organismsDiffer>false</organismsDiffer>
    <experiments>3</experiments>
</comment>
<comment type="interaction">
    <interactant intactId="EBI-12039345">
        <id>Q9UBR4-2</id>
    </interactant>
    <interactant intactId="EBI-17644640">
        <id>Q9NR21-1</id>
        <label>PARP11</label>
    </interactant>
    <organismsDiffer>false</organismsDiffer>
    <experiments>3</experiments>
</comment>
<comment type="interaction">
    <interactant intactId="EBI-12039345">
        <id>Q9UBR4-2</id>
    </interactant>
    <interactant intactId="EBI-3921217">
        <id>Q9HBI0</id>
        <label>PARVG</label>
    </interactant>
    <organismsDiffer>false</organismsDiffer>
    <experiments>3</experiments>
</comment>
<comment type="interaction">
    <interactant intactId="EBI-12039345">
        <id>Q9UBR4-2</id>
    </interactant>
    <interactant intactId="EBI-10171633">
        <id>Q96PV4</id>
        <label>PNMA5</label>
    </interactant>
    <organismsDiffer>false</organismsDiffer>
    <experiments>3</experiments>
</comment>
<comment type="interaction">
    <interactant intactId="EBI-12039345">
        <id>Q9UBR4-2</id>
    </interactant>
    <interactant intactId="EBI-1053424">
        <id>O43741</id>
        <label>PRKAB2</label>
    </interactant>
    <organismsDiffer>false</organismsDiffer>
    <experiments>3</experiments>
</comment>
<comment type="interaction">
    <interactant intactId="EBI-12039345">
        <id>Q9UBR4-2</id>
    </interactant>
    <interactant intactId="EBI-372273">
        <id>P20618</id>
        <label>PSMB1</label>
    </interactant>
    <organismsDiffer>false</organismsDiffer>
    <experiments>3</experiments>
</comment>
<comment type="interaction">
    <interactant intactId="EBI-12039345">
        <id>Q9UBR4-2</id>
    </interactant>
    <interactant intactId="EBI-11974061">
        <id>Q9UIG4</id>
        <label>PSORS1C2</label>
    </interactant>
    <organismsDiffer>false</organismsDiffer>
    <experiments>7</experiments>
</comment>
<comment type="interaction">
    <interactant intactId="EBI-12039345">
        <id>Q9UBR4-2</id>
    </interactant>
    <interactant intactId="EBI-2798044">
        <id>Q2TAL8</id>
        <label>QRICH1</label>
    </interactant>
    <organismsDiffer>false</organismsDiffer>
    <experiments>3</experiments>
</comment>
<comment type="interaction">
    <interactant intactId="EBI-12039345">
        <id>Q9UBR4-2</id>
    </interactant>
    <interactant intactId="EBI-1504830">
        <id>Q9P2K3-2</id>
        <label>RCOR3</label>
    </interactant>
    <organismsDiffer>false</organismsDiffer>
    <experiments>3</experiments>
</comment>
<comment type="interaction">
    <interactant intactId="EBI-12039345">
        <id>Q9UBR4-2</id>
    </interactant>
    <interactant intactId="EBI-3865223">
        <id>Q96CC6</id>
        <label>RHBDF1</label>
    </interactant>
    <organismsDiffer>false</organismsDiffer>
    <experiments>3</experiments>
</comment>
<comment type="interaction">
    <interactant intactId="EBI-12039345">
        <id>Q9UBR4-2</id>
    </interactant>
    <interactant intactId="EBI-11984663">
        <id>Q06455-2</id>
        <label>RUNX1T1</label>
    </interactant>
    <organismsDiffer>false</organismsDiffer>
    <experiments>3</experiments>
</comment>
<comment type="interaction">
    <interactant intactId="EBI-12039345">
        <id>Q9UBR4-2</id>
    </interactant>
    <interactant intactId="EBI-711613">
        <id>P21673</id>
        <label>SAT1</label>
    </interactant>
    <organismsDiffer>false</organismsDiffer>
    <experiments>5</experiments>
</comment>
<comment type="interaction">
    <interactant intactId="EBI-12039345">
        <id>Q9UBR4-2</id>
    </interactant>
    <interactant intactId="EBI-748391">
        <id>Q9BWG6</id>
        <label>SCNM1</label>
    </interactant>
    <organismsDiffer>false</organismsDiffer>
    <experiments>3</experiments>
</comment>
<comment type="interaction">
    <interactant intactId="EBI-12039345">
        <id>Q9UBR4-2</id>
    </interactant>
    <interactant intactId="EBI-6983382">
        <id>O60880</id>
        <label>SH2D1A</label>
    </interactant>
    <organismsDiffer>false</organismsDiffer>
    <experiments>3</experiments>
</comment>
<comment type="interaction">
    <interactant intactId="EBI-12039345">
        <id>Q9UBR4-2</id>
    </interactant>
    <interactant intactId="EBI-9675976">
        <id>Q9BV90</id>
        <label>SNRNP25</label>
    </interactant>
    <organismsDiffer>false</organismsDiffer>
    <experiments>7</experiments>
</comment>
<comment type="interaction">
    <interactant intactId="EBI-12039345">
        <id>Q9UBR4-2</id>
    </interactant>
    <interactant intactId="EBI-11955057">
        <id>Q8N8B7-2</id>
        <label>TCEANC</label>
    </interactant>
    <organismsDiffer>false</organismsDiffer>
    <experiments>3</experiments>
</comment>
<comment type="interaction">
    <interactant intactId="EBI-12039345">
        <id>Q9UBR4-2</id>
    </interactant>
    <interactant intactId="EBI-6674697">
        <id>Q8IWB6</id>
        <label>TEX14</label>
    </interactant>
    <organismsDiffer>false</organismsDiffer>
    <experiments>5</experiments>
</comment>
<comment type="interaction">
    <interactant intactId="EBI-12039345">
        <id>Q9UBR4-2</id>
    </interactant>
    <interactant intactId="EBI-11741437">
        <id>Q08117-2</id>
        <label>TLE5</label>
    </interactant>
    <organismsDiffer>false</organismsDiffer>
    <experiments>3</experiments>
</comment>
<comment type="interaction">
    <interactant intactId="EBI-12039345">
        <id>Q9UBR4-2</id>
    </interactant>
    <interactant intactId="EBI-2559824">
        <id>Q7Z6J9</id>
        <label>TSEN54</label>
    </interactant>
    <organismsDiffer>false</organismsDiffer>
    <experiments>5</experiments>
</comment>
<comment type="interaction">
    <interactant intactId="EBI-12039345">
        <id>Q9UBR4-2</id>
    </interactant>
    <interactant intactId="EBI-3918381">
        <id>Q96PN8</id>
        <label>TSSK3</label>
    </interactant>
    <organismsDiffer>false</organismsDiffer>
    <experiments>3</experiments>
</comment>
<comment type="interaction">
    <interactant intactId="EBI-12039345">
        <id>Q9UBR4-2</id>
    </interactant>
    <interactant intactId="EBI-17208936">
        <id>P0CB47</id>
        <label>UBTFL1</label>
    </interactant>
    <organismsDiffer>false</organismsDiffer>
    <experiments>3</experiments>
</comment>
<comment type="interaction">
    <interactant intactId="EBI-12039345">
        <id>Q9UBR4-2</id>
    </interactant>
    <interactant intactId="EBI-743272">
        <id>O75604</id>
        <label>USP2</label>
    </interactant>
    <organismsDiffer>false</organismsDiffer>
    <experiments>3</experiments>
</comment>
<comment type="interaction">
    <interactant intactId="EBI-12039345">
        <id>Q9UBR4-2</id>
    </interactant>
    <interactant intactId="EBI-11980193">
        <id>Q14119</id>
        <label>VEZF1</label>
    </interactant>
    <organismsDiffer>false</organismsDiffer>
    <experiments>5</experiments>
</comment>
<comment type="interaction">
    <interactant intactId="EBI-12039345">
        <id>Q9UBR4-2</id>
    </interactant>
    <interactant intactId="EBI-765538">
        <id>P25490</id>
        <label>YY1</label>
    </interactant>
    <organismsDiffer>false</organismsDiffer>
    <experiments>3</experiments>
</comment>
<comment type="interaction">
    <interactant intactId="EBI-12039345">
        <id>Q9UBR4-2</id>
    </interactant>
    <interactant intactId="EBI-740727">
        <id>Q8TAU3</id>
        <label>ZNF417</label>
    </interactant>
    <organismsDiffer>false</organismsDiffer>
    <experiments>3</experiments>
</comment>
<comment type="interaction">
    <interactant intactId="EBI-12039345">
        <id>Q9UBR4-2</id>
    </interactant>
    <interactant intactId="EBI-17189720">
        <id>Q6ZN55-2</id>
        <label>ZNF574</label>
    </interactant>
    <organismsDiffer>false</organismsDiffer>
    <experiments>3</experiments>
</comment>
<comment type="interaction">
    <interactant intactId="EBI-12039345">
        <id>Q9UBR4-2</id>
    </interactant>
    <interactant intactId="EBI-6427977">
        <id>Q96SQ5</id>
        <label>ZNF587</label>
    </interactant>
    <organismsDiffer>false</organismsDiffer>
    <experiments>3</experiments>
</comment>
<comment type="interaction">
    <interactant intactId="EBI-12039345">
        <id>Q9UBR4-2</id>
    </interactant>
    <interactant intactId="EBI-7254550">
        <id>P36508</id>
        <label>ZNF76</label>
    </interactant>
    <organismsDiffer>false</organismsDiffer>
    <experiments>5</experiments>
</comment>
<comment type="subcellular location">
    <subcellularLocation>
        <location evidence="12">Nucleus</location>
    </subcellularLocation>
</comment>
<comment type="alternative products">
    <event type="alternative splicing"/>
    <isoform>
        <id>Q9UBR4-1</id>
        <name>A</name>
        <sequence type="displayed"/>
    </isoform>
    <isoform>
        <id>Q9UBR4-2</id>
        <name>B</name>
        <sequence type="described" ref="VSP_003107"/>
    </isoform>
    <text>Additional isoforms seem to exist.</text>
</comment>
<comment type="domain">
    <text evidence="1">The LIM domain specifically interacts with the Pit-1 POU domain and is required for synergistic interactions with Pit-1, but not for basal transcriptional activation events.</text>
</comment>
<comment type="disease" evidence="6 8 11">
    <disease id="DI-02580">
        <name>Pituitary hormone deficiency, combined, 3</name>
        <acronym>CPHD3</acronym>
        <description>Combined pituitary hormone deficiency is defined as the impaired production of growth hormone and one or more of the other five anterior pituitary hormones. CPHD3 is characterized by a complete deficit in all but one (adrenocorticotropin) anterior pituitary hormone and a rigid cervical spine leading to limited head rotation.</description>
        <dbReference type="MIM" id="221750"/>
    </disease>
    <text>The disease is caused by variants affecting the gene represented in this entry.</text>
</comment>
<name>LHX3_HUMAN</name>
<gene>
    <name type="primary">LHX3</name>
</gene>
<organism>
    <name type="scientific">Homo sapiens</name>
    <name type="common">Human</name>
    <dbReference type="NCBI Taxonomy" id="9606"/>
    <lineage>
        <taxon>Eukaryota</taxon>
        <taxon>Metazoa</taxon>
        <taxon>Chordata</taxon>
        <taxon>Craniata</taxon>
        <taxon>Vertebrata</taxon>
        <taxon>Euteleostomi</taxon>
        <taxon>Mammalia</taxon>
        <taxon>Eutheria</taxon>
        <taxon>Euarchontoglires</taxon>
        <taxon>Primates</taxon>
        <taxon>Haplorrhini</taxon>
        <taxon>Catarrhini</taxon>
        <taxon>Hominidae</taxon>
        <taxon>Homo</taxon>
    </lineage>
</organism>
<proteinExistence type="evidence at protein level"/>
<evidence type="ECO:0000250" key="1"/>
<evidence type="ECO:0000250" key="2">
    <source>
        <dbReference type="UniProtKB" id="P50481"/>
    </source>
</evidence>
<evidence type="ECO:0000255" key="3">
    <source>
        <dbReference type="PROSITE-ProRule" id="PRU00108"/>
    </source>
</evidence>
<evidence type="ECO:0000255" key="4">
    <source>
        <dbReference type="PROSITE-ProRule" id="PRU00125"/>
    </source>
</evidence>
<evidence type="ECO:0000256" key="5">
    <source>
        <dbReference type="SAM" id="MobiDB-lite"/>
    </source>
</evidence>
<evidence type="ECO:0000269" key="6">
    <source>
    </source>
</evidence>
<evidence type="ECO:0000269" key="7">
    <source>
    </source>
</evidence>
<evidence type="ECO:0000269" key="8">
    <source>
    </source>
</evidence>
<evidence type="ECO:0000269" key="9">
    <source>
    </source>
</evidence>
<evidence type="ECO:0000269" key="10">
    <source>
    </source>
</evidence>
<evidence type="ECO:0000269" key="11">
    <source>
    </source>
</evidence>
<evidence type="ECO:0000305" key="12"/>
<accession>Q9UBR4</accession>
<accession>Q5TB39</accession>
<accession>Q5TB40</accession>
<accession>Q9NZB5</accession>
<accession>Q9P0I8</accession>
<accession>Q9P0I9</accession>
<protein>
    <recommendedName>
        <fullName>LIM/homeobox protein Lhx3</fullName>
        <shortName>LIM homeobox protein 3</shortName>
    </recommendedName>
</protein>
<keyword id="KW-0010">Activator</keyword>
<keyword id="KW-0025">Alternative splicing</keyword>
<keyword id="KW-0225">Disease variant</keyword>
<keyword id="KW-0238">DNA-binding</keyword>
<keyword id="KW-0242">Dwarfism</keyword>
<keyword id="KW-0371">Homeobox</keyword>
<keyword id="KW-0440">LIM domain</keyword>
<keyword id="KW-0479">Metal-binding</keyword>
<keyword id="KW-0539">Nucleus</keyword>
<keyword id="KW-0597">Phosphoprotein</keyword>
<keyword id="KW-1267">Proteomics identification</keyword>
<keyword id="KW-1185">Reference proteome</keyword>
<keyword id="KW-0677">Repeat</keyword>
<keyword id="KW-0804">Transcription</keyword>
<keyword id="KW-0805">Transcription regulation</keyword>
<keyword id="KW-0862">Zinc</keyword>
<sequence length="397" mass="43358">MLLETGLERDRARPGAAAVCTLGGTREIPLCAGCDQHILDRFILKALDRHWHSKCLKCSDCHTPLAERCFSRGESVYCKDDFFKRFGTKCAACQLGIPPTQVVRRAQDFVYHLHCFACVVCKRQLATGDEFYLMEDSRLVCKADYETAKQREAEATAKRPRTTITAKQLETLKSAYNTSPKPARHVREQLSSETGLDMRVVQVWFQNRRAKEKRLKKDAGRQRWGQYFRNMKRSRGGSKSDKDSVQEGQDSDAEVSFPDEPSLAEMGPANGLYGSLGEPTQALGRPSGALGNFSLEHGGLAGPEQYRELRPGSPYGVPPSPAAPQSLPGPQPLLSSLVYPDTSLGLVPSGAPGGPPPMRVLAGNGPSSDLSTGSSGGYPDFPASPASWLDEVDHAQF</sequence>
<dbReference type="EMBL" id="AF156888">
    <property type="protein sequence ID" value="AAF36808.1"/>
    <property type="molecule type" value="mRNA"/>
</dbReference>
<dbReference type="EMBL" id="AF156889">
    <property type="protein sequence ID" value="AAF36809.1"/>
    <property type="molecule type" value="mRNA"/>
</dbReference>
<dbReference type="EMBL" id="AH008761">
    <property type="protein sequence ID" value="AAF17291.1"/>
    <property type="molecule type" value="Genomic_DNA"/>
</dbReference>
<dbReference type="EMBL" id="AF096169">
    <property type="protein sequence ID" value="AAF17292.1"/>
    <property type="molecule type" value="mRNA"/>
</dbReference>
<dbReference type="EMBL" id="AF214637">
    <property type="protein sequence ID" value="AAF26412.1"/>
    <property type="molecule type" value="Genomic_DNA"/>
</dbReference>
<dbReference type="EMBL" id="AF367089">
    <property type="protein sequence ID" value="AAL26314.1"/>
    <property type="molecule type" value="Genomic_DNA"/>
</dbReference>
<dbReference type="EMBL" id="AF367085">
    <property type="protein sequence ID" value="AAL26314.1"/>
    <property type="status" value="JOINED"/>
    <property type="molecule type" value="Genomic_DNA"/>
</dbReference>
<dbReference type="EMBL" id="AF367086">
    <property type="protein sequence ID" value="AAL26314.1"/>
    <property type="status" value="JOINED"/>
    <property type="molecule type" value="Genomic_DNA"/>
</dbReference>
<dbReference type="EMBL" id="AF367087">
    <property type="protein sequence ID" value="AAL26314.1"/>
    <property type="status" value="JOINED"/>
    <property type="molecule type" value="Genomic_DNA"/>
</dbReference>
<dbReference type="EMBL" id="AF367088">
    <property type="protein sequence ID" value="AAL26314.1"/>
    <property type="status" value="JOINED"/>
    <property type="molecule type" value="Genomic_DNA"/>
</dbReference>
<dbReference type="EMBL" id="AL138781">
    <property type="status" value="NOT_ANNOTATED_CDS"/>
    <property type="molecule type" value="Genomic_DNA"/>
</dbReference>
<dbReference type="EMBL" id="CH471090">
    <property type="protein sequence ID" value="EAW88205.1"/>
    <property type="molecule type" value="Genomic_DNA"/>
</dbReference>
<dbReference type="EMBL" id="CH471090">
    <property type="protein sequence ID" value="EAW88206.1"/>
    <property type="molecule type" value="Genomic_DNA"/>
</dbReference>
<dbReference type="CCDS" id="CCDS6994.1">
    <molecule id="Q9UBR4-1"/>
</dbReference>
<dbReference type="CCDS" id="CCDS6995.1">
    <molecule id="Q9UBR4-2"/>
</dbReference>
<dbReference type="RefSeq" id="NP_055379.1">
    <molecule id="Q9UBR4-2"/>
    <property type="nucleotide sequence ID" value="NM_014564.5"/>
</dbReference>
<dbReference type="RefSeq" id="NP_835258.1">
    <molecule id="Q9UBR4-1"/>
    <property type="nucleotide sequence ID" value="NM_178138.6"/>
</dbReference>
<dbReference type="SMR" id="Q9UBR4"/>
<dbReference type="BioGRID" id="113718">
    <property type="interactions" value="176"/>
</dbReference>
<dbReference type="CORUM" id="Q9UBR4"/>
<dbReference type="FunCoup" id="Q9UBR4">
    <property type="interactions" value="949"/>
</dbReference>
<dbReference type="IntAct" id="Q9UBR4">
    <property type="interactions" value="167"/>
</dbReference>
<dbReference type="STRING" id="9606.ENSP00000360811"/>
<dbReference type="iPTMnet" id="Q9UBR4"/>
<dbReference type="PhosphoSitePlus" id="Q9UBR4"/>
<dbReference type="BioMuta" id="LHX3"/>
<dbReference type="DMDM" id="12643415"/>
<dbReference type="jPOST" id="Q9UBR4"/>
<dbReference type="MassIVE" id="Q9UBR4"/>
<dbReference type="PaxDb" id="9606-ENSP00000360811"/>
<dbReference type="PeptideAtlas" id="Q9UBR4"/>
<dbReference type="Antibodypedia" id="18678">
    <property type="antibodies" value="147 antibodies from 27 providers"/>
</dbReference>
<dbReference type="DNASU" id="8022"/>
<dbReference type="Ensembl" id="ENST00000371746.9">
    <molecule id="Q9UBR4-2"/>
    <property type="protein sequence ID" value="ENSP00000360811.3"/>
    <property type="gene ID" value="ENSG00000107187.17"/>
</dbReference>
<dbReference type="Ensembl" id="ENST00000371748.10">
    <molecule id="Q9UBR4-1"/>
    <property type="protein sequence ID" value="ENSP00000360813.4"/>
    <property type="gene ID" value="ENSG00000107187.17"/>
</dbReference>
<dbReference type="GeneID" id="8022"/>
<dbReference type="KEGG" id="hsa:8022"/>
<dbReference type="MANE-Select" id="ENST00000371748.10">
    <property type="protein sequence ID" value="ENSP00000360813.4"/>
    <property type="RefSeq nucleotide sequence ID" value="NM_178138.6"/>
    <property type="RefSeq protein sequence ID" value="NP_835258.1"/>
</dbReference>
<dbReference type="UCSC" id="uc004cgz.3">
    <molecule id="Q9UBR4-1"/>
    <property type="organism name" value="human"/>
</dbReference>
<dbReference type="AGR" id="HGNC:6595"/>
<dbReference type="CTD" id="8022"/>
<dbReference type="DisGeNET" id="8022"/>
<dbReference type="GeneCards" id="LHX3"/>
<dbReference type="HGNC" id="HGNC:6595">
    <property type="gene designation" value="LHX3"/>
</dbReference>
<dbReference type="HPA" id="ENSG00000107187">
    <property type="expression patterns" value="Tissue enriched (pituitary)"/>
</dbReference>
<dbReference type="MalaCards" id="LHX3"/>
<dbReference type="MIM" id="221750">
    <property type="type" value="phenotype"/>
</dbReference>
<dbReference type="MIM" id="600577">
    <property type="type" value="gene"/>
</dbReference>
<dbReference type="neXtProt" id="NX_Q9UBR4"/>
<dbReference type="OpenTargets" id="ENSG00000107187"/>
<dbReference type="Orphanet" id="226307">
    <property type="disease" value="Hypothyroidism due to deficient transcription factors involved in pituitary development or function"/>
</dbReference>
<dbReference type="Orphanet" id="231720">
    <property type="disease" value="Non-acquired combined pituitary hormone deficiency-sensorineural hearing loss-spine abnormalities syndrome"/>
</dbReference>
<dbReference type="PharmGKB" id="PA30366"/>
<dbReference type="VEuPathDB" id="HostDB:ENSG00000107187"/>
<dbReference type="eggNOG" id="KOG4577">
    <property type="taxonomic scope" value="Eukaryota"/>
</dbReference>
<dbReference type="GeneTree" id="ENSGT00940000160316"/>
<dbReference type="InParanoid" id="Q9UBR4"/>
<dbReference type="OMA" id="QAMSGHP"/>
<dbReference type="OrthoDB" id="10068367at2759"/>
<dbReference type="PAN-GO" id="Q9UBR4">
    <property type="GO annotations" value="5 GO annotations based on evolutionary models"/>
</dbReference>
<dbReference type="PhylomeDB" id="Q9UBR4"/>
<dbReference type="TreeFam" id="TF315442"/>
<dbReference type="PathwayCommons" id="Q9UBR4"/>
<dbReference type="Reactome" id="R-HSA-9010553">
    <property type="pathway name" value="Regulation of expression of SLITs and ROBOs"/>
</dbReference>
<dbReference type="SignaLink" id="Q9UBR4"/>
<dbReference type="SIGNOR" id="Q9UBR4"/>
<dbReference type="BioGRID-ORCS" id="8022">
    <property type="hits" value="15 hits in 1168 CRISPR screens"/>
</dbReference>
<dbReference type="ChiTaRS" id="LHX3">
    <property type="organism name" value="human"/>
</dbReference>
<dbReference type="GeneWiki" id="LHX3"/>
<dbReference type="GenomeRNAi" id="8022"/>
<dbReference type="Pharos" id="Q9UBR4">
    <property type="development level" value="Tbio"/>
</dbReference>
<dbReference type="PRO" id="PR:Q9UBR4"/>
<dbReference type="Proteomes" id="UP000005640">
    <property type="component" value="Chromosome 9"/>
</dbReference>
<dbReference type="RNAct" id="Q9UBR4">
    <property type="molecule type" value="protein"/>
</dbReference>
<dbReference type="Bgee" id="ENSG00000107187">
    <property type="expression patterns" value="Expressed in pituitary gland and 17 other cell types or tissues"/>
</dbReference>
<dbReference type="ExpressionAtlas" id="Q9UBR4">
    <property type="expression patterns" value="baseline and differential"/>
</dbReference>
<dbReference type="GO" id="GO:0000785">
    <property type="term" value="C:chromatin"/>
    <property type="evidence" value="ECO:0000247"/>
    <property type="project" value="NTNU_SB"/>
</dbReference>
<dbReference type="GO" id="GO:0005634">
    <property type="term" value="C:nucleus"/>
    <property type="evidence" value="ECO:0000318"/>
    <property type="project" value="GO_Central"/>
</dbReference>
<dbReference type="GO" id="GO:0005667">
    <property type="term" value="C:transcription regulator complex"/>
    <property type="evidence" value="ECO:0007669"/>
    <property type="project" value="Ensembl"/>
</dbReference>
<dbReference type="GO" id="GO:0001228">
    <property type="term" value="F:DNA-binding transcription activator activity, RNA polymerase II-specific"/>
    <property type="evidence" value="ECO:0000314"/>
    <property type="project" value="NTNU_SB"/>
</dbReference>
<dbReference type="GO" id="GO:0000981">
    <property type="term" value="F:DNA-binding transcription factor activity, RNA polymerase II-specific"/>
    <property type="evidence" value="ECO:0000247"/>
    <property type="project" value="NTNU_SB"/>
</dbReference>
<dbReference type="GO" id="GO:0000978">
    <property type="term" value="F:RNA polymerase II cis-regulatory region sequence-specific DNA binding"/>
    <property type="evidence" value="ECO:0007669"/>
    <property type="project" value="Ensembl"/>
</dbReference>
<dbReference type="GO" id="GO:0000977">
    <property type="term" value="F:RNA polymerase II transcription regulatory region sequence-specific DNA binding"/>
    <property type="evidence" value="ECO:0000318"/>
    <property type="project" value="GO_Central"/>
</dbReference>
<dbReference type="GO" id="GO:0061629">
    <property type="term" value="F:RNA polymerase II-specific DNA-binding transcription factor binding"/>
    <property type="evidence" value="ECO:0000353"/>
    <property type="project" value="UniProtKB"/>
</dbReference>
<dbReference type="GO" id="GO:0043565">
    <property type="term" value="F:sequence-specific DNA binding"/>
    <property type="evidence" value="ECO:0000314"/>
    <property type="project" value="NTNU_SB"/>
</dbReference>
<dbReference type="GO" id="GO:0001223">
    <property type="term" value="F:transcription coactivator binding"/>
    <property type="evidence" value="ECO:0007669"/>
    <property type="project" value="Ensembl"/>
</dbReference>
<dbReference type="GO" id="GO:0008270">
    <property type="term" value="F:zinc ion binding"/>
    <property type="evidence" value="ECO:0007669"/>
    <property type="project" value="InterPro"/>
</dbReference>
<dbReference type="GO" id="GO:0009887">
    <property type="term" value="P:animal organ morphogenesis"/>
    <property type="evidence" value="ECO:0000304"/>
    <property type="project" value="ProtInc"/>
</dbReference>
<dbReference type="GO" id="GO:0006915">
    <property type="term" value="P:apoptotic process"/>
    <property type="evidence" value="ECO:0007669"/>
    <property type="project" value="Ensembl"/>
</dbReference>
<dbReference type="GO" id="GO:0048839">
    <property type="term" value="P:inner ear development"/>
    <property type="evidence" value="ECO:0000270"/>
    <property type="project" value="UniProtKB"/>
</dbReference>
<dbReference type="GO" id="GO:0030324">
    <property type="term" value="P:lung development"/>
    <property type="evidence" value="ECO:0007669"/>
    <property type="project" value="Ensembl"/>
</dbReference>
<dbReference type="GO" id="GO:0021526">
    <property type="term" value="P:medial motor column neuron differentiation"/>
    <property type="evidence" value="ECO:0007669"/>
    <property type="project" value="Ensembl"/>
</dbReference>
<dbReference type="GO" id="GO:0008045">
    <property type="term" value="P:motor neuron axon guidance"/>
    <property type="evidence" value="ECO:0007669"/>
    <property type="project" value="Ensembl"/>
</dbReference>
<dbReference type="GO" id="GO:0043066">
    <property type="term" value="P:negative regulation of apoptotic process"/>
    <property type="evidence" value="ECO:0007669"/>
    <property type="project" value="Ensembl"/>
</dbReference>
<dbReference type="GO" id="GO:0030182">
    <property type="term" value="P:neuron differentiation"/>
    <property type="evidence" value="ECO:0000318"/>
    <property type="project" value="GO_Central"/>
</dbReference>
<dbReference type="GO" id="GO:0001890">
    <property type="term" value="P:placenta development"/>
    <property type="evidence" value="ECO:0007669"/>
    <property type="project" value="Ensembl"/>
</dbReference>
<dbReference type="GO" id="GO:0045893">
    <property type="term" value="P:positive regulation of DNA-templated transcription"/>
    <property type="evidence" value="ECO:0000250"/>
    <property type="project" value="UniProtKB"/>
</dbReference>
<dbReference type="GO" id="GO:0045944">
    <property type="term" value="P:positive regulation of transcription by RNA polymerase II"/>
    <property type="evidence" value="ECO:0000314"/>
    <property type="project" value="NTNU_SB"/>
</dbReference>
<dbReference type="GO" id="GO:0060127">
    <property type="term" value="P:prolactin secreting cell differentiation"/>
    <property type="evidence" value="ECO:0007669"/>
    <property type="project" value="Ensembl"/>
</dbReference>
<dbReference type="GO" id="GO:0006357">
    <property type="term" value="P:regulation of transcription by RNA polymerase II"/>
    <property type="evidence" value="ECO:0000318"/>
    <property type="project" value="GO_Central"/>
</dbReference>
<dbReference type="GO" id="GO:0060126">
    <property type="term" value="P:somatotropin secreting cell differentiation"/>
    <property type="evidence" value="ECO:0007669"/>
    <property type="project" value="Ensembl"/>
</dbReference>
<dbReference type="GO" id="GO:0021527">
    <property type="term" value="P:spinal cord association neuron differentiation"/>
    <property type="evidence" value="ECO:0007669"/>
    <property type="project" value="Ensembl"/>
</dbReference>
<dbReference type="GO" id="GO:0021520">
    <property type="term" value="P:spinal cord motor neuron cell fate specification"/>
    <property type="evidence" value="ECO:0007669"/>
    <property type="project" value="Ensembl"/>
</dbReference>
<dbReference type="GO" id="GO:0060129">
    <property type="term" value="P:thyroid-stimulating hormone-secreting cell differentiation"/>
    <property type="evidence" value="ECO:0007669"/>
    <property type="project" value="Ensembl"/>
</dbReference>
<dbReference type="GO" id="GO:0021521">
    <property type="term" value="P:ventral spinal cord interneuron specification"/>
    <property type="evidence" value="ECO:0007669"/>
    <property type="project" value="Ensembl"/>
</dbReference>
<dbReference type="CDD" id="cd00086">
    <property type="entry name" value="homeodomain"/>
    <property type="match status" value="1"/>
</dbReference>
<dbReference type="CDD" id="cd09467">
    <property type="entry name" value="LIM1_Lhx3b"/>
    <property type="match status" value="1"/>
</dbReference>
<dbReference type="CDD" id="cd09376">
    <property type="entry name" value="LIM2_Lhx3_Lhx4"/>
    <property type="match status" value="1"/>
</dbReference>
<dbReference type="FunFam" id="2.10.110.10:FF:000120">
    <property type="entry name" value="Insulin gene enhancer protein ISL-2"/>
    <property type="match status" value="1"/>
</dbReference>
<dbReference type="FunFam" id="1.10.10.60:FF:000219">
    <property type="entry name" value="LIM/homeobox protein Lhx3"/>
    <property type="match status" value="1"/>
</dbReference>
<dbReference type="FunFam" id="2.10.110.10:FF:000032">
    <property type="entry name" value="LIM/homeobox protein Lhx3"/>
    <property type="match status" value="1"/>
</dbReference>
<dbReference type="Gene3D" id="2.10.110.10">
    <property type="entry name" value="Cysteine Rich Protein"/>
    <property type="match status" value="2"/>
</dbReference>
<dbReference type="Gene3D" id="1.10.10.60">
    <property type="entry name" value="Homeodomain-like"/>
    <property type="match status" value="1"/>
</dbReference>
<dbReference type="InterPro" id="IPR001356">
    <property type="entry name" value="HD"/>
</dbReference>
<dbReference type="InterPro" id="IPR017970">
    <property type="entry name" value="Homeobox_CS"/>
</dbReference>
<dbReference type="InterPro" id="IPR009057">
    <property type="entry name" value="Homeodomain-like_sf"/>
</dbReference>
<dbReference type="InterPro" id="IPR049594">
    <property type="entry name" value="Lhx3/4-like_LIM2"/>
</dbReference>
<dbReference type="InterPro" id="IPR049593">
    <property type="entry name" value="Lhx3_LIM1"/>
</dbReference>
<dbReference type="InterPro" id="IPR050453">
    <property type="entry name" value="LIM_Homeobox_TF"/>
</dbReference>
<dbReference type="InterPro" id="IPR001781">
    <property type="entry name" value="Znf_LIM"/>
</dbReference>
<dbReference type="PANTHER" id="PTHR24208">
    <property type="entry name" value="LIM/HOMEOBOX PROTEIN LHX"/>
    <property type="match status" value="1"/>
</dbReference>
<dbReference type="PANTHER" id="PTHR24208:SF91">
    <property type="entry name" value="LIM_HOMEOBOX PROTEIN LHX3"/>
    <property type="match status" value="1"/>
</dbReference>
<dbReference type="Pfam" id="PF00046">
    <property type="entry name" value="Homeodomain"/>
    <property type="match status" value="1"/>
</dbReference>
<dbReference type="Pfam" id="PF00412">
    <property type="entry name" value="LIM"/>
    <property type="match status" value="2"/>
</dbReference>
<dbReference type="SMART" id="SM00389">
    <property type="entry name" value="HOX"/>
    <property type="match status" value="1"/>
</dbReference>
<dbReference type="SMART" id="SM00132">
    <property type="entry name" value="LIM"/>
    <property type="match status" value="2"/>
</dbReference>
<dbReference type="SUPFAM" id="SSF57716">
    <property type="entry name" value="Glucocorticoid receptor-like (DNA-binding domain)"/>
    <property type="match status" value="2"/>
</dbReference>
<dbReference type="SUPFAM" id="SSF46689">
    <property type="entry name" value="Homeodomain-like"/>
    <property type="match status" value="1"/>
</dbReference>
<dbReference type="PROSITE" id="PS00027">
    <property type="entry name" value="HOMEOBOX_1"/>
    <property type="match status" value="1"/>
</dbReference>
<dbReference type="PROSITE" id="PS50071">
    <property type="entry name" value="HOMEOBOX_2"/>
    <property type="match status" value="1"/>
</dbReference>
<dbReference type="PROSITE" id="PS00478">
    <property type="entry name" value="LIM_DOMAIN_1"/>
    <property type="match status" value="2"/>
</dbReference>
<dbReference type="PROSITE" id="PS50023">
    <property type="entry name" value="LIM_DOMAIN_2"/>
    <property type="match status" value="2"/>
</dbReference>
<feature type="chain" id="PRO_0000075781" description="LIM/homeobox protein Lhx3">
    <location>
        <begin position="1"/>
        <end position="397"/>
    </location>
</feature>
<feature type="domain" description="LIM zinc-binding 1" evidence="4">
    <location>
        <begin position="31"/>
        <end position="81"/>
    </location>
</feature>
<feature type="domain" description="LIM zinc-binding 2" evidence="4">
    <location>
        <begin position="90"/>
        <end position="144"/>
    </location>
</feature>
<feature type="DNA-binding region" description="Homeobox" evidence="3">
    <location>
        <begin position="157"/>
        <end position="216"/>
    </location>
</feature>
<feature type="region of interest" description="Disordered" evidence="5">
    <location>
        <begin position="212"/>
        <end position="397"/>
    </location>
</feature>
<feature type="compositionally biased region" description="Pro residues" evidence="5">
    <location>
        <begin position="316"/>
        <end position="331"/>
    </location>
</feature>
<feature type="modified residue" description="Phosphothreonine" evidence="7">
    <location>
        <position position="63"/>
    </location>
</feature>
<feature type="modified residue" description="Phosphoserine" evidence="7">
    <location>
        <position position="71"/>
    </location>
</feature>
<feature type="modified residue" description="Phosphotyrosine" evidence="7">
    <location>
        <position position="227"/>
    </location>
</feature>
<feature type="modified residue" description="Phosphoserine" evidence="7">
    <location>
        <position position="234"/>
    </location>
</feature>
<feature type="modified residue" description="Phosphoserine" evidence="7">
    <location>
        <position position="238"/>
    </location>
</feature>
<feature type="splice variant" id="VSP_003107" description="In isoform B." evidence="12">
    <original>MLLETGLERDRARPGAAAVCTLGGT</original>
    <variation>MEARGELGPARESAGGDLLLALLARRADLR</variation>
    <location>
        <begin position="1"/>
        <end position="25"/>
    </location>
</feature>
<feature type="sequence variant" id="VAR_010713" description="In CPHD3; dbSNP:rs104894117." evidence="6">
    <original>Y</original>
    <variation>C</variation>
    <location>
        <position position="111"/>
    </location>
</feature>
<feature type="sequence variant" id="VAR_079378" description="In CPHD3; uncertain significance." evidence="11">
    <original>C</original>
    <variation>F</variation>
    <location>
        <position position="141"/>
    </location>
</feature>
<feature type="sequence variant" id="VAR_079379" description="In CPHD3." evidence="11">
    <location>
        <begin position="151"/>
        <end position="397"/>
    </location>
</feature>
<feature type="sequence variant" id="VAR_063240" description="In CPHD3; results in diminished DNA binding and pituitary gene activation; dbSNP:rs137854503." evidence="8">
    <original>A</original>
    <variation>V</variation>
    <location>
        <position position="210"/>
    </location>
</feature>
<feature type="sequence conflict" description="In Ref. 2; AAF17291." evidence="12" ref="2">
    <original>C</original>
    <variation>R</variation>
    <location>
        <position position="34"/>
    </location>
</feature>